<evidence type="ECO:0000255" key="1">
    <source>
        <dbReference type="HAMAP-Rule" id="MF_00131"/>
    </source>
</evidence>
<gene>
    <name evidence="1" type="primary">trpA</name>
    <name type="ordered locus">APJL_0497</name>
</gene>
<accession>B0BU73</accession>
<sequence length="269" mass="28979">MSRFDTLFANLKAKNEGAFVPFVTLCDPDFDRSFEIIETLIANGADALELGFPFSDPLLDGSVIQAANKRALDGGYSTDACFEMIAKIRSKYPEIPIGLLLCANLVFVPTQDVFFKRCAETGVDAVLIADVPVLAAEEFTQAAKKHGIQSVFICPPNADQATIERIARLTEGYTYLVSRAGVTSAENQAHAKNLDNLIESLKRSNSAPILQGFGIAKPEQVKEALALGCDGAISGSAIVKIIERNLDSQTQLLSELAKFVSVMKTATKS</sequence>
<comment type="function">
    <text evidence="1">The alpha subunit is responsible for the aldol cleavage of indoleglycerol phosphate to indole and glyceraldehyde 3-phosphate.</text>
</comment>
<comment type="catalytic activity">
    <reaction evidence="1">
        <text>(1S,2R)-1-C-(indol-3-yl)glycerol 3-phosphate + L-serine = D-glyceraldehyde 3-phosphate + L-tryptophan + H2O</text>
        <dbReference type="Rhea" id="RHEA:10532"/>
        <dbReference type="ChEBI" id="CHEBI:15377"/>
        <dbReference type="ChEBI" id="CHEBI:33384"/>
        <dbReference type="ChEBI" id="CHEBI:57912"/>
        <dbReference type="ChEBI" id="CHEBI:58866"/>
        <dbReference type="ChEBI" id="CHEBI:59776"/>
        <dbReference type="EC" id="4.2.1.20"/>
    </reaction>
</comment>
<comment type="pathway">
    <text evidence="1">Amino-acid biosynthesis; L-tryptophan biosynthesis; L-tryptophan from chorismate: step 5/5.</text>
</comment>
<comment type="subunit">
    <text evidence="1">Tetramer of two alpha and two beta chains.</text>
</comment>
<comment type="similarity">
    <text evidence="1">Belongs to the TrpA family.</text>
</comment>
<proteinExistence type="inferred from homology"/>
<keyword id="KW-0028">Amino-acid biosynthesis</keyword>
<keyword id="KW-0057">Aromatic amino acid biosynthesis</keyword>
<keyword id="KW-0456">Lyase</keyword>
<keyword id="KW-0822">Tryptophan biosynthesis</keyword>
<name>TRPA_ACTPJ</name>
<reference key="1">
    <citation type="journal article" date="2008" name="PLoS ONE">
        <title>Genome biology of Actinobacillus pleuropneumoniae JL03, an isolate of serotype 3 prevalent in China.</title>
        <authorList>
            <person name="Xu Z."/>
            <person name="Zhou Y."/>
            <person name="Li L."/>
            <person name="Zhou R."/>
            <person name="Xiao S."/>
            <person name="Wan Y."/>
            <person name="Zhang S."/>
            <person name="Wang K."/>
            <person name="Li W."/>
            <person name="Li L."/>
            <person name="Jin H."/>
            <person name="Kang M."/>
            <person name="Dalai B."/>
            <person name="Li T."/>
            <person name="Liu L."/>
            <person name="Cheng Y."/>
            <person name="Zhang L."/>
            <person name="Xu T."/>
            <person name="Zheng H."/>
            <person name="Pu S."/>
            <person name="Wang B."/>
            <person name="Gu W."/>
            <person name="Zhang X.L."/>
            <person name="Zhu G.-F."/>
            <person name="Wang S."/>
            <person name="Zhao G.-P."/>
            <person name="Chen H."/>
        </authorList>
    </citation>
    <scope>NUCLEOTIDE SEQUENCE [LARGE SCALE GENOMIC DNA]</scope>
    <source>
        <strain>JL03</strain>
    </source>
</reference>
<protein>
    <recommendedName>
        <fullName evidence="1">Tryptophan synthase alpha chain</fullName>
        <ecNumber evidence="1">4.2.1.20</ecNumber>
    </recommendedName>
</protein>
<dbReference type="EC" id="4.2.1.20" evidence="1"/>
<dbReference type="EMBL" id="CP000687">
    <property type="protein sequence ID" value="ABY69078.1"/>
    <property type="molecule type" value="Genomic_DNA"/>
</dbReference>
<dbReference type="RefSeq" id="WP_012262828.1">
    <property type="nucleotide sequence ID" value="NC_010278.1"/>
</dbReference>
<dbReference type="SMR" id="B0BU73"/>
<dbReference type="KEGG" id="apj:APJL_0497"/>
<dbReference type="HOGENOM" id="CLU_016734_0_4_6"/>
<dbReference type="UniPathway" id="UPA00035">
    <property type="reaction ID" value="UER00044"/>
</dbReference>
<dbReference type="Proteomes" id="UP000008547">
    <property type="component" value="Chromosome"/>
</dbReference>
<dbReference type="GO" id="GO:0005829">
    <property type="term" value="C:cytosol"/>
    <property type="evidence" value="ECO:0007669"/>
    <property type="project" value="TreeGrafter"/>
</dbReference>
<dbReference type="GO" id="GO:0004834">
    <property type="term" value="F:tryptophan synthase activity"/>
    <property type="evidence" value="ECO:0007669"/>
    <property type="project" value="UniProtKB-UniRule"/>
</dbReference>
<dbReference type="CDD" id="cd04724">
    <property type="entry name" value="Tryptophan_synthase_alpha"/>
    <property type="match status" value="1"/>
</dbReference>
<dbReference type="FunFam" id="3.20.20.70:FF:000037">
    <property type="entry name" value="Tryptophan synthase alpha chain"/>
    <property type="match status" value="1"/>
</dbReference>
<dbReference type="Gene3D" id="3.20.20.70">
    <property type="entry name" value="Aldolase class I"/>
    <property type="match status" value="1"/>
</dbReference>
<dbReference type="HAMAP" id="MF_00131">
    <property type="entry name" value="Trp_synth_alpha"/>
    <property type="match status" value="1"/>
</dbReference>
<dbReference type="InterPro" id="IPR013785">
    <property type="entry name" value="Aldolase_TIM"/>
</dbReference>
<dbReference type="InterPro" id="IPR011060">
    <property type="entry name" value="RibuloseP-bd_barrel"/>
</dbReference>
<dbReference type="InterPro" id="IPR018204">
    <property type="entry name" value="Trp_synthase_alpha_AS"/>
</dbReference>
<dbReference type="InterPro" id="IPR002028">
    <property type="entry name" value="Trp_synthase_suA"/>
</dbReference>
<dbReference type="NCBIfam" id="TIGR00262">
    <property type="entry name" value="trpA"/>
    <property type="match status" value="1"/>
</dbReference>
<dbReference type="PANTHER" id="PTHR43406:SF1">
    <property type="entry name" value="TRYPTOPHAN SYNTHASE ALPHA CHAIN, CHLOROPLASTIC"/>
    <property type="match status" value="1"/>
</dbReference>
<dbReference type="PANTHER" id="PTHR43406">
    <property type="entry name" value="TRYPTOPHAN SYNTHASE, ALPHA CHAIN"/>
    <property type="match status" value="1"/>
</dbReference>
<dbReference type="Pfam" id="PF00290">
    <property type="entry name" value="Trp_syntA"/>
    <property type="match status" value="1"/>
</dbReference>
<dbReference type="SUPFAM" id="SSF51366">
    <property type="entry name" value="Ribulose-phoshate binding barrel"/>
    <property type="match status" value="1"/>
</dbReference>
<dbReference type="PROSITE" id="PS00167">
    <property type="entry name" value="TRP_SYNTHASE_ALPHA"/>
    <property type="match status" value="1"/>
</dbReference>
<feature type="chain" id="PRO_1000095690" description="Tryptophan synthase alpha chain">
    <location>
        <begin position="1"/>
        <end position="269"/>
    </location>
</feature>
<feature type="active site" description="Proton acceptor" evidence="1">
    <location>
        <position position="49"/>
    </location>
</feature>
<feature type="active site" description="Proton acceptor" evidence="1">
    <location>
        <position position="60"/>
    </location>
</feature>
<organism>
    <name type="scientific">Actinobacillus pleuropneumoniae serotype 3 (strain JL03)</name>
    <dbReference type="NCBI Taxonomy" id="434271"/>
    <lineage>
        <taxon>Bacteria</taxon>
        <taxon>Pseudomonadati</taxon>
        <taxon>Pseudomonadota</taxon>
        <taxon>Gammaproteobacteria</taxon>
        <taxon>Pasteurellales</taxon>
        <taxon>Pasteurellaceae</taxon>
        <taxon>Actinobacillus</taxon>
    </lineage>
</organism>